<evidence type="ECO:0000255" key="1">
    <source>
        <dbReference type="HAMAP-Rule" id="MF_01307"/>
    </source>
</evidence>
<evidence type="ECO:0000305" key="2"/>
<protein>
    <recommendedName>
        <fullName evidence="1">Small ribosomal subunit protein uS5</fullName>
    </recommendedName>
    <alternativeName>
        <fullName evidence="2">30S ribosomal protein S5</fullName>
    </alternativeName>
</protein>
<accession>Q8A493</accession>
<organism>
    <name type="scientific">Bacteroides thetaiotaomicron (strain ATCC 29148 / DSM 2079 / JCM 5827 / CCUG 10774 / NCTC 10582 / VPI-5482 / E50)</name>
    <dbReference type="NCBI Taxonomy" id="226186"/>
    <lineage>
        <taxon>Bacteria</taxon>
        <taxon>Pseudomonadati</taxon>
        <taxon>Bacteroidota</taxon>
        <taxon>Bacteroidia</taxon>
        <taxon>Bacteroidales</taxon>
        <taxon>Bacteroidaceae</taxon>
        <taxon>Bacteroides</taxon>
    </lineage>
</organism>
<comment type="function">
    <text evidence="1">With S4 and S12 plays an important role in translational accuracy.</text>
</comment>
<comment type="function">
    <text evidence="1">Located at the back of the 30S subunit body where it stabilizes the conformation of the head with respect to the body.</text>
</comment>
<comment type="subunit">
    <text evidence="1">Part of the 30S ribosomal subunit. Contacts proteins S4 and S8.</text>
</comment>
<comment type="domain">
    <text>The N-terminal domain interacts with the head of the 30S subunit; the C-terminal domain interacts with the body and contacts protein S4. The interaction surface between S4 and S5 is involved in control of translational fidelity.</text>
</comment>
<comment type="similarity">
    <text evidence="1">Belongs to the universal ribosomal protein uS5 family.</text>
</comment>
<dbReference type="EMBL" id="AE015928">
    <property type="protein sequence ID" value="AAO77816.1"/>
    <property type="molecule type" value="Genomic_DNA"/>
</dbReference>
<dbReference type="RefSeq" id="NP_811622.1">
    <property type="nucleotide sequence ID" value="NC_004663.1"/>
</dbReference>
<dbReference type="RefSeq" id="WP_008762045.1">
    <property type="nucleotide sequence ID" value="NZ_UYXG01000001.1"/>
</dbReference>
<dbReference type="SMR" id="Q8A493"/>
<dbReference type="FunCoup" id="Q8A493">
    <property type="interactions" value="667"/>
</dbReference>
<dbReference type="STRING" id="226186.BT_2710"/>
<dbReference type="PaxDb" id="226186-BT_2710"/>
<dbReference type="EnsemblBacteria" id="AAO77816">
    <property type="protein sequence ID" value="AAO77816"/>
    <property type="gene ID" value="BT_2710"/>
</dbReference>
<dbReference type="GeneID" id="69587570"/>
<dbReference type="KEGG" id="bth:BT_2710"/>
<dbReference type="PATRIC" id="fig|226186.12.peg.2753"/>
<dbReference type="eggNOG" id="COG0098">
    <property type="taxonomic scope" value="Bacteria"/>
</dbReference>
<dbReference type="HOGENOM" id="CLU_065898_2_2_10"/>
<dbReference type="InParanoid" id="Q8A493"/>
<dbReference type="OrthoDB" id="9809045at2"/>
<dbReference type="Proteomes" id="UP000001414">
    <property type="component" value="Chromosome"/>
</dbReference>
<dbReference type="GO" id="GO:0022627">
    <property type="term" value="C:cytosolic small ribosomal subunit"/>
    <property type="evidence" value="ECO:0000318"/>
    <property type="project" value="GO_Central"/>
</dbReference>
<dbReference type="GO" id="GO:0019843">
    <property type="term" value="F:rRNA binding"/>
    <property type="evidence" value="ECO:0007669"/>
    <property type="project" value="UniProtKB-UniRule"/>
</dbReference>
<dbReference type="GO" id="GO:0003735">
    <property type="term" value="F:structural constituent of ribosome"/>
    <property type="evidence" value="ECO:0000318"/>
    <property type="project" value="GO_Central"/>
</dbReference>
<dbReference type="GO" id="GO:0006412">
    <property type="term" value="P:translation"/>
    <property type="evidence" value="ECO:0000318"/>
    <property type="project" value="GO_Central"/>
</dbReference>
<dbReference type="FunFam" id="3.30.160.20:FF:000001">
    <property type="entry name" value="30S ribosomal protein S5"/>
    <property type="match status" value="1"/>
</dbReference>
<dbReference type="FunFam" id="3.30.230.10:FF:000002">
    <property type="entry name" value="30S ribosomal protein S5"/>
    <property type="match status" value="1"/>
</dbReference>
<dbReference type="Gene3D" id="3.30.160.20">
    <property type="match status" value="1"/>
</dbReference>
<dbReference type="Gene3D" id="3.30.230.10">
    <property type="match status" value="1"/>
</dbReference>
<dbReference type="HAMAP" id="MF_01307_B">
    <property type="entry name" value="Ribosomal_uS5_B"/>
    <property type="match status" value="1"/>
</dbReference>
<dbReference type="InterPro" id="IPR020568">
    <property type="entry name" value="Ribosomal_Su5_D2-typ_SF"/>
</dbReference>
<dbReference type="InterPro" id="IPR000851">
    <property type="entry name" value="Ribosomal_uS5"/>
</dbReference>
<dbReference type="InterPro" id="IPR005712">
    <property type="entry name" value="Ribosomal_uS5_bac-type"/>
</dbReference>
<dbReference type="InterPro" id="IPR005324">
    <property type="entry name" value="Ribosomal_uS5_C"/>
</dbReference>
<dbReference type="InterPro" id="IPR013810">
    <property type="entry name" value="Ribosomal_uS5_N"/>
</dbReference>
<dbReference type="InterPro" id="IPR018192">
    <property type="entry name" value="Ribosomal_uS5_N_CS"/>
</dbReference>
<dbReference type="InterPro" id="IPR014721">
    <property type="entry name" value="Ribsml_uS5_D2-typ_fold_subgr"/>
</dbReference>
<dbReference type="NCBIfam" id="TIGR01021">
    <property type="entry name" value="rpsE_bact"/>
    <property type="match status" value="1"/>
</dbReference>
<dbReference type="PANTHER" id="PTHR48277">
    <property type="entry name" value="MITOCHONDRIAL RIBOSOMAL PROTEIN S5"/>
    <property type="match status" value="1"/>
</dbReference>
<dbReference type="PANTHER" id="PTHR48277:SF1">
    <property type="entry name" value="MITOCHONDRIAL RIBOSOMAL PROTEIN S5"/>
    <property type="match status" value="1"/>
</dbReference>
<dbReference type="Pfam" id="PF00333">
    <property type="entry name" value="Ribosomal_S5"/>
    <property type="match status" value="1"/>
</dbReference>
<dbReference type="Pfam" id="PF03719">
    <property type="entry name" value="Ribosomal_S5_C"/>
    <property type="match status" value="1"/>
</dbReference>
<dbReference type="SUPFAM" id="SSF54768">
    <property type="entry name" value="dsRNA-binding domain-like"/>
    <property type="match status" value="1"/>
</dbReference>
<dbReference type="SUPFAM" id="SSF54211">
    <property type="entry name" value="Ribosomal protein S5 domain 2-like"/>
    <property type="match status" value="1"/>
</dbReference>
<dbReference type="PROSITE" id="PS00585">
    <property type="entry name" value="RIBOSOMAL_S5"/>
    <property type="match status" value="1"/>
</dbReference>
<dbReference type="PROSITE" id="PS50881">
    <property type="entry name" value="S5_DSRBD"/>
    <property type="match status" value="1"/>
</dbReference>
<name>RS5_BACTN</name>
<feature type="chain" id="PRO_0000131471" description="Small ribosomal subunit protein uS5">
    <location>
        <begin position="1"/>
        <end position="172"/>
    </location>
</feature>
<feature type="domain" description="S5 DRBM" evidence="1">
    <location>
        <begin position="16"/>
        <end position="79"/>
    </location>
</feature>
<keyword id="KW-1185">Reference proteome</keyword>
<keyword id="KW-0687">Ribonucleoprotein</keyword>
<keyword id="KW-0689">Ribosomal protein</keyword>
<keyword id="KW-0694">RNA-binding</keyword>
<keyword id="KW-0699">rRNA-binding</keyword>
<reference key="1">
    <citation type="journal article" date="2003" name="Science">
        <title>A genomic view of the human-Bacteroides thetaiotaomicron symbiosis.</title>
        <authorList>
            <person name="Xu J."/>
            <person name="Bjursell M.K."/>
            <person name="Himrod J."/>
            <person name="Deng S."/>
            <person name="Carmichael L.K."/>
            <person name="Chiang H.C."/>
            <person name="Hooper L.V."/>
            <person name="Gordon J.I."/>
        </authorList>
    </citation>
    <scope>NUCLEOTIDE SEQUENCE [LARGE SCALE GENOMIC DNA]</scope>
    <source>
        <strain>ATCC 29148 / DSM 2079 / JCM 5827 / CCUG 10774 / NCTC 10582 / VPI-5482 / E50</strain>
    </source>
</reference>
<proteinExistence type="inferred from homology"/>
<sequence length="172" mass="17944">MAGVNNRVKVTNDIELKDRLVAINRVTKVTKGGRTFSFSAIVVVGNEEGIIGWGLGKAGEVTAAIAKGVESAKKNLVKVPVLKGTVPHEQSAKFGGAEVFIKPASHGTGVVAGGAMRAVLESVGITDVLAKSKGSSNPHNLVKATIEALSEMRDARMIAQNRGISVEKVFRG</sequence>
<gene>
    <name evidence="1" type="primary">rpsE</name>
    <name type="ordered locus">BT_2710</name>
</gene>